<protein>
    <recommendedName>
        <fullName evidence="1">Ketol-acid reductoisomerase (NADP(+))</fullName>
        <shortName evidence="1">KARI</shortName>
        <ecNumber evidence="1">1.1.1.86</ecNumber>
    </recommendedName>
    <alternativeName>
        <fullName evidence="1">Acetohydroxy-acid isomeroreductase</fullName>
        <shortName evidence="1">AHIR</shortName>
    </alternativeName>
    <alternativeName>
        <fullName evidence="1">Alpha-keto-beta-hydroxylacyl reductoisomerase</fullName>
    </alternativeName>
    <alternativeName>
        <fullName evidence="1">Ketol-acid reductoisomerase type 1</fullName>
    </alternativeName>
    <alternativeName>
        <fullName evidence="1">Ketol-acid reductoisomerase type I</fullName>
    </alternativeName>
</protein>
<keyword id="KW-0028">Amino-acid biosynthesis</keyword>
<keyword id="KW-0100">Branched-chain amino acid biosynthesis</keyword>
<keyword id="KW-0460">Magnesium</keyword>
<keyword id="KW-0479">Metal-binding</keyword>
<keyword id="KW-0521">NADP</keyword>
<keyword id="KW-0560">Oxidoreductase</keyword>
<keyword id="KW-1185">Reference proteome</keyword>
<sequence>MNIYYEQDADLAVLQNKNIAILGYGSQGHAHALNLKDSGMNVCVGLKTDSASCAKAREAGLKVDTVAEAVKWADIVMILLPDQTQKSVYDNEIAPNLKSGATLAFGHGFNIHYKQIVPPADVNVIMIAPKSPGHLVRRTYTEGNGVPCLIAVHQDATGDAKAIALAWAKGIGGTKAGVIETSFKDETETDLFGEQAVLCGGSAELIKAGFETLTEAGYPAELAYFECMHELKLIVDLYYEGGLSRMNYSVSDTAEYGGMTRGPRVVTSAAKAEMKKILEEIQDGRFAKEFIDECNSGYKKMNELRESNRNHPIEVVGAKLRGMMSWLKKK</sequence>
<name>ILVC_CHLTE</name>
<organism>
    <name type="scientific">Chlorobaculum tepidum (strain ATCC 49652 / DSM 12025 / NBRC 103806 / TLS)</name>
    <name type="common">Chlorobium tepidum</name>
    <dbReference type="NCBI Taxonomy" id="194439"/>
    <lineage>
        <taxon>Bacteria</taxon>
        <taxon>Pseudomonadati</taxon>
        <taxon>Chlorobiota</taxon>
        <taxon>Chlorobiia</taxon>
        <taxon>Chlorobiales</taxon>
        <taxon>Chlorobiaceae</taxon>
        <taxon>Chlorobaculum</taxon>
    </lineage>
</organism>
<dbReference type="EC" id="1.1.1.86" evidence="1"/>
<dbReference type="EMBL" id="AE006470">
    <property type="protein sequence ID" value="AAM71858.1"/>
    <property type="molecule type" value="Genomic_DNA"/>
</dbReference>
<dbReference type="RefSeq" id="NP_661516.1">
    <property type="nucleotide sequence ID" value="NC_002932.3"/>
</dbReference>
<dbReference type="RefSeq" id="WP_010932303.1">
    <property type="nucleotide sequence ID" value="NC_002932.3"/>
</dbReference>
<dbReference type="SMR" id="Q8KER7"/>
<dbReference type="STRING" id="194439.CT0616"/>
<dbReference type="EnsemblBacteria" id="AAM71858">
    <property type="protein sequence ID" value="AAM71858"/>
    <property type="gene ID" value="CT0616"/>
</dbReference>
<dbReference type="KEGG" id="cte:CT0616"/>
<dbReference type="PATRIC" id="fig|194439.7.peg.573"/>
<dbReference type="eggNOG" id="COG0059">
    <property type="taxonomic scope" value="Bacteria"/>
</dbReference>
<dbReference type="HOGENOM" id="CLU_033821_0_1_10"/>
<dbReference type="OrthoDB" id="9804088at2"/>
<dbReference type="UniPathway" id="UPA00047">
    <property type="reaction ID" value="UER00056"/>
</dbReference>
<dbReference type="UniPathway" id="UPA00049">
    <property type="reaction ID" value="UER00060"/>
</dbReference>
<dbReference type="Proteomes" id="UP000001007">
    <property type="component" value="Chromosome"/>
</dbReference>
<dbReference type="GO" id="GO:0005829">
    <property type="term" value="C:cytosol"/>
    <property type="evidence" value="ECO:0007669"/>
    <property type="project" value="TreeGrafter"/>
</dbReference>
<dbReference type="GO" id="GO:0004455">
    <property type="term" value="F:ketol-acid reductoisomerase activity"/>
    <property type="evidence" value="ECO:0007669"/>
    <property type="project" value="UniProtKB-UniRule"/>
</dbReference>
<dbReference type="GO" id="GO:0000287">
    <property type="term" value="F:magnesium ion binding"/>
    <property type="evidence" value="ECO:0007669"/>
    <property type="project" value="UniProtKB-UniRule"/>
</dbReference>
<dbReference type="GO" id="GO:0050661">
    <property type="term" value="F:NADP binding"/>
    <property type="evidence" value="ECO:0007669"/>
    <property type="project" value="InterPro"/>
</dbReference>
<dbReference type="GO" id="GO:0009097">
    <property type="term" value="P:isoleucine biosynthetic process"/>
    <property type="evidence" value="ECO:0007669"/>
    <property type="project" value="UniProtKB-UniRule"/>
</dbReference>
<dbReference type="GO" id="GO:0009099">
    <property type="term" value="P:L-valine biosynthetic process"/>
    <property type="evidence" value="ECO:0007669"/>
    <property type="project" value="UniProtKB-UniRule"/>
</dbReference>
<dbReference type="FunFam" id="3.40.50.720:FF:000023">
    <property type="entry name" value="Ketol-acid reductoisomerase (NADP(+))"/>
    <property type="match status" value="1"/>
</dbReference>
<dbReference type="Gene3D" id="6.10.240.10">
    <property type="match status" value="1"/>
</dbReference>
<dbReference type="Gene3D" id="3.40.50.720">
    <property type="entry name" value="NAD(P)-binding Rossmann-like Domain"/>
    <property type="match status" value="1"/>
</dbReference>
<dbReference type="HAMAP" id="MF_00435">
    <property type="entry name" value="IlvC"/>
    <property type="match status" value="1"/>
</dbReference>
<dbReference type="InterPro" id="IPR008927">
    <property type="entry name" value="6-PGluconate_DH-like_C_sf"/>
</dbReference>
<dbReference type="InterPro" id="IPR013023">
    <property type="entry name" value="KARI"/>
</dbReference>
<dbReference type="InterPro" id="IPR000506">
    <property type="entry name" value="KARI_C"/>
</dbReference>
<dbReference type="InterPro" id="IPR013116">
    <property type="entry name" value="KARI_N"/>
</dbReference>
<dbReference type="InterPro" id="IPR014359">
    <property type="entry name" value="KARI_prok"/>
</dbReference>
<dbReference type="InterPro" id="IPR036291">
    <property type="entry name" value="NAD(P)-bd_dom_sf"/>
</dbReference>
<dbReference type="NCBIfam" id="TIGR00465">
    <property type="entry name" value="ilvC"/>
    <property type="match status" value="1"/>
</dbReference>
<dbReference type="NCBIfam" id="NF004017">
    <property type="entry name" value="PRK05479.1"/>
    <property type="match status" value="1"/>
</dbReference>
<dbReference type="NCBIfam" id="NF009940">
    <property type="entry name" value="PRK13403.1"/>
    <property type="match status" value="1"/>
</dbReference>
<dbReference type="PANTHER" id="PTHR21371">
    <property type="entry name" value="KETOL-ACID REDUCTOISOMERASE, MITOCHONDRIAL"/>
    <property type="match status" value="1"/>
</dbReference>
<dbReference type="PANTHER" id="PTHR21371:SF1">
    <property type="entry name" value="KETOL-ACID REDUCTOISOMERASE, MITOCHONDRIAL"/>
    <property type="match status" value="1"/>
</dbReference>
<dbReference type="Pfam" id="PF01450">
    <property type="entry name" value="KARI_C"/>
    <property type="match status" value="1"/>
</dbReference>
<dbReference type="Pfam" id="PF07991">
    <property type="entry name" value="KARI_N"/>
    <property type="match status" value="1"/>
</dbReference>
<dbReference type="PIRSF" id="PIRSF000116">
    <property type="entry name" value="IlvC_gammaproteo"/>
    <property type="match status" value="1"/>
</dbReference>
<dbReference type="SUPFAM" id="SSF48179">
    <property type="entry name" value="6-phosphogluconate dehydrogenase C-terminal domain-like"/>
    <property type="match status" value="1"/>
</dbReference>
<dbReference type="SUPFAM" id="SSF51735">
    <property type="entry name" value="NAD(P)-binding Rossmann-fold domains"/>
    <property type="match status" value="1"/>
</dbReference>
<dbReference type="PROSITE" id="PS51851">
    <property type="entry name" value="KARI_C"/>
    <property type="match status" value="1"/>
</dbReference>
<dbReference type="PROSITE" id="PS51850">
    <property type="entry name" value="KARI_N"/>
    <property type="match status" value="1"/>
</dbReference>
<comment type="function">
    <text evidence="1">Involved in the biosynthesis of branched-chain amino acids (BCAA). Catalyzes an alkyl-migration followed by a ketol-acid reduction of (S)-2-acetolactate (S2AL) to yield (R)-2,3-dihydroxy-isovalerate. In the isomerase reaction, S2AL is rearranged via a Mg-dependent methyl migration to produce 3-hydroxy-3-methyl-2-ketobutyrate (HMKB). In the reductase reaction, this 2-ketoacid undergoes a metal-dependent reduction by NADPH to yield (R)-2,3-dihydroxy-isovalerate.</text>
</comment>
<comment type="catalytic activity">
    <reaction evidence="1">
        <text>(2R)-2,3-dihydroxy-3-methylbutanoate + NADP(+) = (2S)-2-acetolactate + NADPH + H(+)</text>
        <dbReference type="Rhea" id="RHEA:22068"/>
        <dbReference type="ChEBI" id="CHEBI:15378"/>
        <dbReference type="ChEBI" id="CHEBI:49072"/>
        <dbReference type="ChEBI" id="CHEBI:57783"/>
        <dbReference type="ChEBI" id="CHEBI:58349"/>
        <dbReference type="ChEBI" id="CHEBI:58476"/>
        <dbReference type="EC" id="1.1.1.86"/>
    </reaction>
</comment>
<comment type="catalytic activity">
    <reaction evidence="1">
        <text>(2R,3R)-2,3-dihydroxy-3-methylpentanoate + NADP(+) = (S)-2-ethyl-2-hydroxy-3-oxobutanoate + NADPH + H(+)</text>
        <dbReference type="Rhea" id="RHEA:13493"/>
        <dbReference type="ChEBI" id="CHEBI:15378"/>
        <dbReference type="ChEBI" id="CHEBI:49256"/>
        <dbReference type="ChEBI" id="CHEBI:49258"/>
        <dbReference type="ChEBI" id="CHEBI:57783"/>
        <dbReference type="ChEBI" id="CHEBI:58349"/>
        <dbReference type="EC" id="1.1.1.86"/>
    </reaction>
</comment>
<comment type="cofactor">
    <cofactor evidence="1">
        <name>Mg(2+)</name>
        <dbReference type="ChEBI" id="CHEBI:18420"/>
    </cofactor>
    <text evidence="1">Binds 2 magnesium ions per subunit.</text>
</comment>
<comment type="pathway">
    <text evidence="1">Amino-acid biosynthesis; L-isoleucine biosynthesis; L-isoleucine from 2-oxobutanoate: step 2/4.</text>
</comment>
<comment type="pathway">
    <text evidence="1">Amino-acid biosynthesis; L-valine biosynthesis; L-valine from pyruvate: step 2/4.</text>
</comment>
<comment type="similarity">
    <text evidence="1">Belongs to the ketol-acid reductoisomerase family.</text>
</comment>
<proteinExistence type="inferred from homology"/>
<evidence type="ECO:0000255" key="1">
    <source>
        <dbReference type="HAMAP-Rule" id="MF_00435"/>
    </source>
</evidence>
<evidence type="ECO:0000255" key="2">
    <source>
        <dbReference type="PROSITE-ProRule" id="PRU01197"/>
    </source>
</evidence>
<evidence type="ECO:0000255" key="3">
    <source>
        <dbReference type="PROSITE-ProRule" id="PRU01198"/>
    </source>
</evidence>
<feature type="chain" id="PRO_0000151301" description="Ketol-acid reductoisomerase (NADP(+))">
    <location>
        <begin position="1"/>
        <end position="330"/>
    </location>
</feature>
<feature type="domain" description="KARI N-terminal Rossmann" evidence="2">
    <location>
        <begin position="1"/>
        <end position="181"/>
    </location>
</feature>
<feature type="domain" description="KARI C-terminal knotted" evidence="3">
    <location>
        <begin position="182"/>
        <end position="327"/>
    </location>
</feature>
<feature type="active site" evidence="1">
    <location>
        <position position="107"/>
    </location>
</feature>
<feature type="binding site" evidence="1">
    <location>
        <begin position="24"/>
        <end position="27"/>
    </location>
    <ligand>
        <name>NADP(+)</name>
        <dbReference type="ChEBI" id="CHEBI:58349"/>
    </ligand>
</feature>
<feature type="binding site" evidence="1">
    <location>
        <position position="47"/>
    </location>
    <ligand>
        <name>NADP(+)</name>
        <dbReference type="ChEBI" id="CHEBI:58349"/>
    </ligand>
</feature>
<feature type="binding site" evidence="1">
    <location>
        <position position="50"/>
    </location>
    <ligand>
        <name>NADP(+)</name>
        <dbReference type="ChEBI" id="CHEBI:58349"/>
    </ligand>
</feature>
<feature type="binding site" evidence="1">
    <location>
        <position position="52"/>
    </location>
    <ligand>
        <name>NADP(+)</name>
        <dbReference type="ChEBI" id="CHEBI:58349"/>
    </ligand>
</feature>
<feature type="binding site" evidence="1">
    <location>
        <begin position="82"/>
        <end position="85"/>
    </location>
    <ligand>
        <name>NADP(+)</name>
        <dbReference type="ChEBI" id="CHEBI:58349"/>
    </ligand>
</feature>
<feature type="binding site" evidence="1">
    <location>
        <position position="133"/>
    </location>
    <ligand>
        <name>NADP(+)</name>
        <dbReference type="ChEBI" id="CHEBI:58349"/>
    </ligand>
</feature>
<feature type="binding site" evidence="1">
    <location>
        <position position="190"/>
    </location>
    <ligand>
        <name>Mg(2+)</name>
        <dbReference type="ChEBI" id="CHEBI:18420"/>
        <label>1</label>
    </ligand>
</feature>
<feature type="binding site" evidence="1">
    <location>
        <position position="190"/>
    </location>
    <ligand>
        <name>Mg(2+)</name>
        <dbReference type="ChEBI" id="CHEBI:18420"/>
        <label>2</label>
    </ligand>
</feature>
<feature type="binding site" evidence="1">
    <location>
        <position position="194"/>
    </location>
    <ligand>
        <name>Mg(2+)</name>
        <dbReference type="ChEBI" id="CHEBI:18420"/>
        <label>1</label>
    </ligand>
</feature>
<feature type="binding site" evidence="1">
    <location>
        <position position="226"/>
    </location>
    <ligand>
        <name>Mg(2+)</name>
        <dbReference type="ChEBI" id="CHEBI:18420"/>
        <label>2</label>
    </ligand>
</feature>
<feature type="binding site" evidence="1">
    <location>
        <position position="230"/>
    </location>
    <ligand>
        <name>Mg(2+)</name>
        <dbReference type="ChEBI" id="CHEBI:18420"/>
        <label>2</label>
    </ligand>
</feature>
<feature type="binding site" evidence="1">
    <location>
        <position position="251"/>
    </location>
    <ligand>
        <name>substrate</name>
    </ligand>
</feature>
<reference key="1">
    <citation type="journal article" date="2002" name="Proc. Natl. Acad. Sci. U.S.A.">
        <title>The complete genome sequence of Chlorobium tepidum TLS, a photosynthetic, anaerobic, green-sulfur bacterium.</title>
        <authorList>
            <person name="Eisen J.A."/>
            <person name="Nelson K.E."/>
            <person name="Paulsen I.T."/>
            <person name="Heidelberg J.F."/>
            <person name="Wu M."/>
            <person name="Dodson R.J."/>
            <person name="DeBoy R.T."/>
            <person name="Gwinn M.L."/>
            <person name="Nelson W.C."/>
            <person name="Haft D.H."/>
            <person name="Hickey E.K."/>
            <person name="Peterson J.D."/>
            <person name="Durkin A.S."/>
            <person name="Kolonay J.F."/>
            <person name="Yang F."/>
            <person name="Holt I.E."/>
            <person name="Umayam L.A."/>
            <person name="Mason T.M."/>
            <person name="Brenner M."/>
            <person name="Shea T.P."/>
            <person name="Parksey D.S."/>
            <person name="Nierman W.C."/>
            <person name="Feldblyum T.V."/>
            <person name="Hansen C.L."/>
            <person name="Craven M.B."/>
            <person name="Radune D."/>
            <person name="Vamathevan J.J."/>
            <person name="Khouri H.M."/>
            <person name="White O."/>
            <person name="Gruber T.M."/>
            <person name="Ketchum K.A."/>
            <person name="Venter J.C."/>
            <person name="Tettelin H."/>
            <person name="Bryant D.A."/>
            <person name="Fraser C.M."/>
        </authorList>
    </citation>
    <scope>NUCLEOTIDE SEQUENCE [LARGE SCALE GENOMIC DNA]</scope>
    <source>
        <strain>ATCC 49652 / DSM 12025 / NBRC 103806 / TLS</strain>
    </source>
</reference>
<accession>Q8KER7</accession>
<gene>
    <name evidence="1" type="primary">ilvC</name>
    <name type="ordered locus">CT0616</name>
</gene>